<proteinExistence type="inferred from homology"/>
<protein>
    <recommendedName>
        <fullName evidence="1">Ubiquitin-related modifier 1</fullName>
    </recommendedName>
</protein>
<organism>
    <name type="scientific">Ajellomyces capsulatus (strain NAm1 / WU24)</name>
    <name type="common">Darling's disease fungus</name>
    <name type="synonym">Histoplasma capsulatum</name>
    <dbReference type="NCBI Taxonomy" id="2059318"/>
    <lineage>
        <taxon>Eukaryota</taxon>
        <taxon>Fungi</taxon>
        <taxon>Dikarya</taxon>
        <taxon>Ascomycota</taxon>
        <taxon>Pezizomycotina</taxon>
        <taxon>Eurotiomycetes</taxon>
        <taxon>Eurotiomycetidae</taxon>
        <taxon>Onygenales</taxon>
        <taxon>Ajellomycetaceae</taxon>
        <taxon>Histoplasma</taxon>
    </lineage>
</organism>
<evidence type="ECO:0000255" key="1">
    <source>
        <dbReference type="HAMAP-Rule" id="MF_03048"/>
    </source>
</evidence>
<reference key="1">
    <citation type="journal article" date="2009" name="Genome Res.">
        <title>Comparative genomic analyses of the human fungal pathogens Coccidioides and their relatives.</title>
        <authorList>
            <person name="Sharpton T.J."/>
            <person name="Stajich J.E."/>
            <person name="Rounsley S.D."/>
            <person name="Gardner M.J."/>
            <person name="Wortman J.R."/>
            <person name="Jordar V.S."/>
            <person name="Maiti R."/>
            <person name="Kodira C.D."/>
            <person name="Neafsey D.E."/>
            <person name="Zeng Q."/>
            <person name="Hung C.-Y."/>
            <person name="McMahan C."/>
            <person name="Muszewska A."/>
            <person name="Grynberg M."/>
            <person name="Mandel M.A."/>
            <person name="Kellner E.M."/>
            <person name="Barker B.M."/>
            <person name="Galgiani J.N."/>
            <person name="Orbach M.J."/>
            <person name="Kirkland T.N."/>
            <person name="Cole G.T."/>
            <person name="Henn M.R."/>
            <person name="Birren B.W."/>
            <person name="Taylor J.W."/>
        </authorList>
    </citation>
    <scope>NUCLEOTIDE SEQUENCE [LARGE SCALE GENOMIC DNA]</scope>
    <source>
        <strain>NAm1 / WU24</strain>
    </source>
</reference>
<sequence>MGSIASPSLSSSSQLLTITVEFTGGLESIFNNTRKHTLSIPATYPSPSTGEPEPTSVASLVHYLIENVMEDTRQELFVVDGAVRPGILVLINDADWELEGEEKYQIQQGDNILFVSTLHGG</sequence>
<comment type="function">
    <text evidence="1">Acts as a sulfur carrier required for 2-thiolation of mcm(5)S(2)U at tRNA wobble positions of cytosolic tRNA(Lys), tRNA(Glu) and tRNA(Gln). Serves as sulfur donor in tRNA 2-thiolation reaction by being thiocarboxylated (-COSH) at its C-terminus by the MOCS3 homolog UBA4. The sulfur is then transferred to tRNA to form 2-thiolation of mcm(5)S(2)U. Prior mcm(5) tRNA modification by the elongator complex is required for 2-thiolation. Also acts as a ubiquitin-like protein (UBL) that is covalently conjugated via an isopeptide bond to lysine residues of target proteins such as AHP1. The thiocarboxylated form serves as substrate for conjugation and oxidative stress specifically induces the formation of UBL-protein conjugates.</text>
</comment>
<comment type="pathway">
    <text evidence="1">tRNA modification; 5-methoxycarbonylmethyl-2-thiouridine-tRNA biosynthesis.</text>
</comment>
<comment type="subcellular location">
    <subcellularLocation>
        <location evidence="1">Cytoplasm</location>
    </subcellularLocation>
</comment>
<comment type="PTM">
    <text evidence="1">C-terminal thiocarboxylation occurs in 2 steps, it is first acyl-adenylated (-COAMP) via the hesA/moeB/thiF part of UBA4, then thiocarboxylated (-COSH) via the rhodanese domain of UBA4.</text>
</comment>
<comment type="similarity">
    <text evidence="1">Belongs to the URM1 family.</text>
</comment>
<name>URM1_AJECN</name>
<keyword id="KW-0963">Cytoplasm</keyword>
<keyword id="KW-1017">Isopeptide bond</keyword>
<keyword id="KW-1185">Reference proteome</keyword>
<keyword id="KW-0819">tRNA processing</keyword>
<keyword id="KW-0833">Ubl conjugation pathway</keyword>
<accession>A6R989</accession>
<gene>
    <name evidence="1" type="primary">URM1</name>
    <name type="ORF">HCAG_06880</name>
</gene>
<dbReference type="EMBL" id="CH476660">
    <property type="protein sequence ID" value="EDN09713.1"/>
    <property type="molecule type" value="Genomic_DNA"/>
</dbReference>
<dbReference type="SMR" id="A6R989"/>
<dbReference type="STRING" id="339724.A6R989"/>
<dbReference type="KEGG" id="aje:HCAG_06880"/>
<dbReference type="VEuPathDB" id="FungiDB:HCAG_06880"/>
<dbReference type="HOGENOM" id="CLU_148208_0_0_1"/>
<dbReference type="OMA" id="DYELQPN"/>
<dbReference type="OrthoDB" id="9041at299071"/>
<dbReference type="UniPathway" id="UPA00988"/>
<dbReference type="Proteomes" id="UP000009297">
    <property type="component" value="Unassembled WGS sequence"/>
</dbReference>
<dbReference type="GO" id="GO:0005829">
    <property type="term" value="C:cytosol"/>
    <property type="evidence" value="ECO:0007669"/>
    <property type="project" value="UniProtKB-UniRule"/>
</dbReference>
<dbReference type="GO" id="GO:0032447">
    <property type="term" value="P:protein urmylation"/>
    <property type="evidence" value="ECO:0007669"/>
    <property type="project" value="UniProtKB-UniRule"/>
</dbReference>
<dbReference type="GO" id="GO:0034227">
    <property type="term" value="P:tRNA thio-modification"/>
    <property type="evidence" value="ECO:0007669"/>
    <property type="project" value="UniProtKB-UniRule"/>
</dbReference>
<dbReference type="GO" id="GO:0002098">
    <property type="term" value="P:tRNA wobble uridine modification"/>
    <property type="evidence" value="ECO:0007669"/>
    <property type="project" value="UniProtKB-UniRule"/>
</dbReference>
<dbReference type="CDD" id="cd01764">
    <property type="entry name" value="Ubl_Urm1"/>
    <property type="match status" value="1"/>
</dbReference>
<dbReference type="Gene3D" id="3.10.20.30">
    <property type="match status" value="1"/>
</dbReference>
<dbReference type="HAMAP" id="MF_03048">
    <property type="entry name" value="Urm1"/>
    <property type="match status" value="1"/>
</dbReference>
<dbReference type="InterPro" id="IPR012675">
    <property type="entry name" value="Beta-grasp_dom_sf"/>
</dbReference>
<dbReference type="InterPro" id="IPR016155">
    <property type="entry name" value="Mopterin_synth/thiamin_S_b"/>
</dbReference>
<dbReference type="InterPro" id="IPR015221">
    <property type="entry name" value="Urm1"/>
</dbReference>
<dbReference type="PANTHER" id="PTHR14986">
    <property type="entry name" value="RURM1 PROTEIN"/>
    <property type="match status" value="1"/>
</dbReference>
<dbReference type="Pfam" id="PF09138">
    <property type="entry name" value="Urm1"/>
    <property type="match status" value="1"/>
</dbReference>
<dbReference type="PIRSF" id="PIRSF037379">
    <property type="entry name" value="Ubiquitin-related_modifier_1"/>
    <property type="match status" value="1"/>
</dbReference>
<dbReference type="SUPFAM" id="SSF54285">
    <property type="entry name" value="MoaD/ThiS"/>
    <property type="match status" value="1"/>
</dbReference>
<feature type="chain" id="PRO_0000367873" description="Ubiquitin-related modifier 1">
    <location>
        <begin position="1"/>
        <end position="121"/>
    </location>
</feature>
<feature type="modified residue" description="1-thioglycine" evidence="1">
    <location>
        <position position="121"/>
    </location>
</feature>
<feature type="cross-link" description="Glycyl lysine isopeptide (Gly-Lys) (interchain with K-? in acceptor proteins)" evidence="1">
    <location>
        <position position="121"/>
    </location>
</feature>